<sequence length="375" mass="42289">MATVCVVGSGILGLAVASCLLEKTNVNIVIISDDFPHESSHDLKYSPFFTSPWAGAHFRPFPSVTEFDQRHVEYTRATYGHFKKLAAFEPQEETSIRFLEGTDLVERGHPNFEYYSELKQGYREEIEDFVVNDWEHGFSASYKTWVLNAPFFLSYLFKKLRSNPRVTLKQGKLNTLREAFTENAAKNDQSPDLGANGYNYVFNCTGLGLQMNGGWDPACYVIRGQTLLLKVPSGPHLQKTVTHQSKEGQWTFFIPRPLSNPESPTEDYVILGGTKQEKDFDSGSPRSQDSLDILTRADRLFPELKDAKTGHFQVIQPNVGFRPSRKGGVRVEREKVPDVENSFAYHCYGAGGMGYELSFGVAFAVVDLFLDDYNQ</sequence>
<dbReference type="EC" id="1.4.3.1" evidence="10"/>
<dbReference type="EMBL" id="FN392321">
    <property type="protein sequence ID" value="CAY71096.1"/>
    <property type="molecule type" value="Genomic_DNA"/>
</dbReference>
<dbReference type="RefSeq" id="XP_002493275.1">
    <property type="nucleotide sequence ID" value="XM_002493230.1"/>
</dbReference>
<dbReference type="SMR" id="C4R6B0"/>
<dbReference type="STRING" id="644223.C4R6B0"/>
<dbReference type="EnsemblFungi" id="CAY71096">
    <property type="protein sequence ID" value="CAY71096"/>
    <property type="gene ID" value="PAS_chr3_1033"/>
</dbReference>
<dbReference type="GeneID" id="8200074"/>
<dbReference type="KEGG" id="ppa:PAS_chr3_1033"/>
<dbReference type="eggNOG" id="KOG3923">
    <property type="taxonomic scope" value="Eukaryota"/>
</dbReference>
<dbReference type="HOGENOM" id="CLU_034311_2_0_1"/>
<dbReference type="InParanoid" id="C4R6B0"/>
<dbReference type="OMA" id="EYDTWVV"/>
<dbReference type="OrthoDB" id="2015447at2759"/>
<dbReference type="Proteomes" id="UP000000314">
    <property type="component" value="Chromosome 3"/>
</dbReference>
<dbReference type="GO" id="GO:0005782">
    <property type="term" value="C:peroxisomal matrix"/>
    <property type="evidence" value="ECO:0000250"/>
    <property type="project" value="UniProtKB"/>
</dbReference>
<dbReference type="GO" id="GO:0008445">
    <property type="term" value="F:D-aspartate oxidase activity"/>
    <property type="evidence" value="ECO:0000315"/>
    <property type="project" value="UniProtKB"/>
</dbReference>
<dbReference type="GO" id="GO:0071949">
    <property type="term" value="F:FAD binding"/>
    <property type="evidence" value="ECO:0000250"/>
    <property type="project" value="UniProtKB"/>
</dbReference>
<dbReference type="GO" id="GO:0019478">
    <property type="term" value="P:D-amino acid catabolic process"/>
    <property type="evidence" value="ECO:0000250"/>
    <property type="project" value="UniProtKB"/>
</dbReference>
<dbReference type="GO" id="GO:0046416">
    <property type="term" value="P:D-amino acid metabolic process"/>
    <property type="evidence" value="ECO:0000315"/>
    <property type="project" value="UniProtKB"/>
</dbReference>
<dbReference type="GO" id="GO:0019740">
    <property type="term" value="P:nitrogen utilization"/>
    <property type="evidence" value="ECO:0000315"/>
    <property type="project" value="UniProtKB"/>
</dbReference>
<dbReference type="Gene3D" id="3.30.9.10">
    <property type="entry name" value="D-Amino Acid Oxidase, subunit A, domain 2"/>
    <property type="match status" value="1"/>
</dbReference>
<dbReference type="Gene3D" id="3.40.50.720">
    <property type="entry name" value="NAD(P)-binding Rossmann-like Domain"/>
    <property type="match status" value="1"/>
</dbReference>
<dbReference type="InterPro" id="IPR023209">
    <property type="entry name" value="DAO"/>
</dbReference>
<dbReference type="InterPro" id="IPR006076">
    <property type="entry name" value="FAD-dep_OxRdtase"/>
</dbReference>
<dbReference type="PANTHER" id="PTHR11530">
    <property type="entry name" value="D-AMINO ACID OXIDASE"/>
    <property type="match status" value="1"/>
</dbReference>
<dbReference type="PANTHER" id="PTHR11530:SF26">
    <property type="entry name" value="FAD DEPENDENT OXIDOREDUCTASE SUPERFAMILY (AFU_ORTHOLOGUE AFUA_5G13940)"/>
    <property type="match status" value="1"/>
</dbReference>
<dbReference type="Pfam" id="PF01266">
    <property type="entry name" value="DAO"/>
    <property type="match status" value="1"/>
</dbReference>
<dbReference type="PIRSF" id="PIRSF000189">
    <property type="entry name" value="D-aa_oxidase"/>
    <property type="match status" value="1"/>
</dbReference>
<dbReference type="SUPFAM" id="SSF54373">
    <property type="entry name" value="FAD-linked reductases, C-terminal domain"/>
    <property type="match status" value="1"/>
</dbReference>
<dbReference type="SUPFAM" id="SSF51971">
    <property type="entry name" value="Nucleotide-binding domain"/>
    <property type="match status" value="1"/>
</dbReference>
<organism evidence="12">
    <name type="scientific">Komagataella phaffii (strain GS115 / ATCC 20864)</name>
    <name type="common">Yeast</name>
    <name type="synonym">Pichia pastoris</name>
    <dbReference type="NCBI Taxonomy" id="644223"/>
    <lineage>
        <taxon>Eukaryota</taxon>
        <taxon>Fungi</taxon>
        <taxon>Dikarya</taxon>
        <taxon>Ascomycota</taxon>
        <taxon>Saccharomycotina</taxon>
        <taxon>Pichiomycetes</taxon>
        <taxon>Pichiales</taxon>
        <taxon>Pichiaceae</taxon>
        <taxon>Komagataella</taxon>
    </lineage>
</organism>
<reference evidence="12" key="1">
    <citation type="journal article" date="2009" name="Nat. Biotechnol.">
        <title>Genome sequence of the recombinant protein production host Pichia pastoris.</title>
        <authorList>
            <person name="De Schutter K."/>
            <person name="Lin Y.-C."/>
            <person name="Tiels P."/>
            <person name="Van Hecke A."/>
            <person name="Glinka S."/>
            <person name="Weber-Lehmann J."/>
            <person name="Rouze P."/>
            <person name="Van de Peer Y."/>
            <person name="Callewaert N."/>
        </authorList>
    </citation>
    <scope>NUCLEOTIDE SEQUENCE [LARGE SCALE GENOMIC DNA]</scope>
    <source>
        <strain>GS115 / ATCC 20864</strain>
    </source>
</reference>
<reference evidence="9" key="2">
    <citation type="journal article" date="2010" name="FEMS Yeast Res.">
        <title>Activation of a peroxisomal Pichia pastoris D-amino acid oxidase, which uses d-alanine as a preferred substrate, depends on pyruvate carboxylase.</title>
        <authorList>
            <person name="Klompmaker S.H."/>
            <person name="Kilic A."/>
            <person name="Baerends R.J."/>
            <person name="Veenhuis M."/>
            <person name="van der Klei I.J."/>
        </authorList>
    </citation>
    <scope>FUNCTION</scope>
    <scope>CATALYTIC ACTIVITY</scope>
    <scope>DISRUPTION PHENOTYPE</scope>
</reference>
<comment type="function">
    <text evidence="3 7">Selectively catalyzes the oxidative deamination of acidic amino acids (PubMed:20550580). Protects the organism from the toxicity of D-amino acids (By similarity). Enables the organism to utilize D-amino acids as a source of nutrients (PubMed:20550580). Enables the organism to utilize D-aspartate as a nitrogen source (PubMed:20550580).</text>
</comment>
<comment type="catalytic activity">
    <reaction evidence="10">
        <text>D-aspartate + O2 + H2O = oxaloacetate + H2O2 + NH4(+)</text>
        <dbReference type="Rhea" id="RHEA:12512"/>
        <dbReference type="ChEBI" id="CHEBI:15377"/>
        <dbReference type="ChEBI" id="CHEBI:15379"/>
        <dbReference type="ChEBI" id="CHEBI:16240"/>
        <dbReference type="ChEBI" id="CHEBI:16452"/>
        <dbReference type="ChEBI" id="CHEBI:28938"/>
        <dbReference type="ChEBI" id="CHEBI:29990"/>
        <dbReference type="EC" id="1.4.3.1"/>
    </reaction>
    <physiologicalReaction direction="left-to-right" evidence="10">
        <dbReference type="Rhea" id="RHEA:12513"/>
    </physiologicalReaction>
</comment>
<comment type="catalytic activity">
    <reaction evidence="1">
        <text>D-glutamate + O2 + H2O = H2O2 + 2-oxoglutarate + NH4(+)</text>
        <dbReference type="Rhea" id="RHEA:10028"/>
        <dbReference type="ChEBI" id="CHEBI:15377"/>
        <dbReference type="ChEBI" id="CHEBI:15379"/>
        <dbReference type="ChEBI" id="CHEBI:16240"/>
        <dbReference type="ChEBI" id="CHEBI:16810"/>
        <dbReference type="ChEBI" id="CHEBI:28938"/>
        <dbReference type="ChEBI" id="CHEBI:29986"/>
    </reaction>
    <physiologicalReaction direction="left-to-right" evidence="1">
        <dbReference type="Rhea" id="RHEA:10029"/>
    </physiologicalReaction>
</comment>
<comment type="cofactor">
    <cofactor evidence="3">
        <name>FAD</name>
        <dbReference type="ChEBI" id="CHEBI:57692"/>
    </cofactor>
</comment>
<comment type="disruption phenotype">
    <text evidence="7">Unable to utilize D-aspartate as a source of nitrogen.</text>
</comment>
<comment type="similarity">
    <text evidence="9">Belongs to the DAMOX/DASOX family.</text>
</comment>
<protein>
    <recommendedName>
        <fullName evidence="8">D-aspartate oxidase</fullName>
        <shortName evidence="9">DASOX</shortName>
        <shortName evidence="4">DASPO</shortName>
        <shortName evidence="9">DDO</shortName>
        <ecNumber evidence="10">1.4.3.1</ecNumber>
    </recommendedName>
</protein>
<accession>C4R6B0</accession>
<keyword id="KW-0274">FAD</keyword>
<keyword id="KW-0285">Flavoprotein</keyword>
<keyword id="KW-0325">Glycoprotein</keyword>
<keyword id="KW-0560">Oxidoreductase</keyword>
<keyword id="KW-1185">Reference proteome</keyword>
<keyword id="KW-0732">Signal</keyword>
<gene>
    <name type="primary">DDO</name>
    <name evidence="8" type="synonym">DAO2</name>
    <name evidence="11" type="ordered locus">PAS_chr3_1033</name>
</gene>
<name>OXDD_KOMPG</name>
<feature type="signal peptide" evidence="5">
    <location>
        <begin position="1"/>
        <end position="17"/>
    </location>
</feature>
<feature type="chain" id="PRO_5002942294" description="D-aspartate oxidase">
    <location>
        <begin position="18"/>
        <end position="375"/>
    </location>
</feature>
<feature type="binding site" evidence="2">
    <location>
        <position position="9"/>
    </location>
    <ligand>
        <name>FAD</name>
        <dbReference type="ChEBI" id="CHEBI:57692"/>
    </ligand>
</feature>
<feature type="binding site" evidence="2">
    <location>
        <position position="12"/>
    </location>
    <ligand>
        <name>FAD</name>
        <dbReference type="ChEBI" id="CHEBI:57692"/>
    </ligand>
</feature>
<feature type="binding site" evidence="2">
    <location>
        <position position="34"/>
    </location>
    <ligand>
        <name>FAD</name>
        <dbReference type="ChEBI" id="CHEBI:57692"/>
    </ligand>
</feature>
<feature type="binding site" evidence="2">
    <location>
        <position position="51"/>
    </location>
    <ligand>
        <name>FAD</name>
        <dbReference type="ChEBI" id="CHEBI:57692"/>
    </ligand>
</feature>
<feature type="binding site" evidence="2">
    <location>
        <position position="55"/>
    </location>
    <ligand>
        <name>FAD</name>
        <dbReference type="ChEBI" id="CHEBI:57692"/>
    </ligand>
</feature>
<feature type="binding site" evidence="2">
    <location>
        <position position="322"/>
    </location>
    <ligand>
        <name>FAD</name>
        <dbReference type="ChEBI" id="CHEBI:57692"/>
    </ligand>
</feature>
<feature type="binding site" evidence="2">
    <location>
        <position position="354"/>
    </location>
    <ligand>
        <name>FAD</name>
        <dbReference type="ChEBI" id="CHEBI:57692"/>
    </ligand>
</feature>
<feature type="binding site" evidence="2">
    <location>
        <position position="355"/>
    </location>
    <ligand>
        <name>FAD</name>
        <dbReference type="ChEBI" id="CHEBI:57692"/>
    </ligand>
</feature>
<feature type="glycosylation site" description="N-linked (GlcNAc...) asparagine" evidence="6">
    <location>
        <position position="203"/>
    </location>
</feature>
<proteinExistence type="evidence at protein level"/>
<evidence type="ECO:0000250" key="1">
    <source>
        <dbReference type="UniProtKB" id="C0HMB0"/>
    </source>
</evidence>
<evidence type="ECO:0000250" key="2">
    <source>
        <dbReference type="UniProtKB" id="P80324"/>
    </source>
</evidence>
<evidence type="ECO:0000250" key="3">
    <source>
        <dbReference type="UniProtKB" id="Q75WF1"/>
    </source>
</evidence>
<evidence type="ECO:0000250" key="4">
    <source>
        <dbReference type="UniProtKB" id="Q99489"/>
    </source>
</evidence>
<evidence type="ECO:0000255" key="5"/>
<evidence type="ECO:0000255" key="6">
    <source>
        <dbReference type="PROSITE-ProRule" id="PRU00498"/>
    </source>
</evidence>
<evidence type="ECO:0000269" key="7">
    <source>
    </source>
</evidence>
<evidence type="ECO:0000303" key="8">
    <source>
    </source>
</evidence>
<evidence type="ECO:0000305" key="9"/>
<evidence type="ECO:0000305" key="10">
    <source>
    </source>
</evidence>
<evidence type="ECO:0000312" key="11">
    <source>
        <dbReference type="EMBL" id="CAY71096.1"/>
    </source>
</evidence>
<evidence type="ECO:0000312" key="12">
    <source>
        <dbReference type="Proteomes" id="UP000000314"/>
    </source>
</evidence>